<protein>
    <recommendedName>
        <fullName evidence="1">7-cyano-7-deazaguanine synthase</fullName>
        <ecNumber evidence="1">6.3.4.20</ecNumber>
    </recommendedName>
    <alternativeName>
        <fullName evidence="1">7-cyano-7-carbaguanine synthase</fullName>
    </alternativeName>
    <alternativeName>
        <fullName evidence="1">PreQ(0) synthase</fullName>
    </alternativeName>
    <alternativeName>
        <fullName evidence="1">Queuosine biosynthesis protein QueC</fullName>
    </alternativeName>
</protein>
<proteinExistence type="inferred from homology"/>
<feature type="chain" id="PRO_1000186596" description="7-cyano-7-deazaguanine synthase">
    <location>
        <begin position="1"/>
        <end position="231"/>
    </location>
</feature>
<feature type="binding site" evidence="1">
    <location>
        <begin position="8"/>
        <end position="18"/>
    </location>
    <ligand>
        <name>ATP</name>
        <dbReference type="ChEBI" id="CHEBI:30616"/>
    </ligand>
</feature>
<feature type="binding site" evidence="1">
    <location>
        <position position="188"/>
    </location>
    <ligand>
        <name>Zn(2+)</name>
        <dbReference type="ChEBI" id="CHEBI:29105"/>
    </ligand>
</feature>
<feature type="binding site" evidence="1">
    <location>
        <position position="197"/>
    </location>
    <ligand>
        <name>Zn(2+)</name>
        <dbReference type="ChEBI" id="CHEBI:29105"/>
    </ligand>
</feature>
<feature type="binding site" evidence="1">
    <location>
        <position position="200"/>
    </location>
    <ligand>
        <name>Zn(2+)</name>
        <dbReference type="ChEBI" id="CHEBI:29105"/>
    </ligand>
</feature>
<feature type="binding site" evidence="1">
    <location>
        <position position="203"/>
    </location>
    <ligand>
        <name>Zn(2+)</name>
        <dbReference type="ChEBI" id="CHEBI:29105"/>
    </ligand>
</feature>
<gene>
    <name evidence="1" type="primary">queC</name>
    <name type="ordered locus">ECSE_0470</name>
</gene>
<accession>B6HZQ1</accession>
<reference key="1">
    <citation type="journal article" date="2008" name="DNA Res.">
        <title>Complete genome sequence and comparative analysis of the wild-type commensal Escherichia coli strain SE11 isolated from a healthy adult.</title>
        <authorList>
            <person name="Oshima K."/>
            <person name="Toh H."/>
            <person name="Ogura Y."/>
            <person name="Sasamoto H."/>
            <person name="Morita H."/>
            <person name="Park S.-H."/>
            <person name="Ooka T."/>
            <person name="Iyoda S."/>
            <person name="Taylor T.D."/>
            <person name="Hayashi T."/>
            <person name="Itoh K."/>
            <person name="Hattori M."/>
        </authorList>
    </citation>
    <scope>NUCLEOTIDE SEQUENCE [LARGE SCALE GENOMIC DNA]</scope>
    <source>
        <strain>SE11</strain>
    </source>
</reference>
<comment type="function">
    <text evidence="1">Catalyzes the ATP-dependent conversion of 7-carboxy-7-deazaguanine (CDG) to 7-cyano-7-deazaguanine (preQ(0)).</text>
</comment>
<comment type="catalytic activity">
    <reaction evidence="1">
        <text>7-carboxy-7-deazaguanine + NH4(+) + ATP = 7-cyano-7-deazaguanine + ADP + phosphate + H2O + H(+)</text>
        <dbReference type="Rhea" id="RHEA:27982"/>
        <dbReference type="ChEBI" id="CHEBI:15377"/>
        <dbReference type="ChEBI" id="CHEBI:15378"/>
        <dbReference type="ChEBI" id="CHEBI:28938"/>
        <dbReference type="ChEBI" id="CHEBI:30616"/>
        <dbReference type="ChEBI" id="CHEBI:43474"/>
        <dbReference type="ChEBI" id="CHEBI:45075"/>
        <dbReference type="ChEBI" id="CHEBI:61036"/>
        <dbReference type="ChEBI" id="CHEBI:456216"/>
        <dbReference type="EC" id="6.3.4.20"/>
    </reaction>
</comment>
<comment type="cofactor">
    <cofactor evidence="1">
        <name>Zn(2+)</name>
        <dbReference type="ChEBI" id="CHEBI:29105"/>
    </cofactor>
    <text evidence="1">Binds 1 zinc ion per subunit.</text>
</comment>
<comment type="pathway">
    <text evidence="1">Purine metabolism; 7-cyano-7-deazaguanine biosynthesis.</text>
</comment>
<comment type="similarity">
    <text evidence="1">Belongs to the QueC family.</text>
</comment>
<sequence length="231" mass="25480">MKRAVVVFSGGQDSTTCLVQALQQYDEVHCVTFDYGQRHRAEIDVARELALKLGARAHKVLDVTLLNELAVSSLTRDSIPVPDYEPEADGIPNTFVPGRNILFLTLAAIYAYQVKAEAVITGVCETDFSGYPDCRDEFVKALNHAVSLGMAKDIRFETPLMWIDKAETWALADYYGKLDLVRNETLTCYNGIKGDGCGHCAACNLRANGLNHYLADKPTVMAAMKQKTGLR</sequence>
<organism>
    <name type="scientific">Escherichia coli (strain SE11)</name>
    <dbReference type="NCBI Taxonomy" id="409438"/>
    <lineage>
        <taxon>Bacteria</taxon>
        <taxon>Pseudomonadati</taxon>
        <taxon>Pseudomonadota</taxon>
        <taxon>Gammaproteobacteria</taxon>
        <taxon>Enterobacterales</taxon>
        <taxon>Enterobacteriaceae</taxon>
        <taxon>Escherichia</taxon>
    </lineage>
</organism>
<dbReference type="EC" id="6.3.4.20" evidence="1"/>
<dbReference type="EMBL" id="AP009240">
    <property type="protein sequence ID" value="BAG75994.1"/>
    <property type="molecule type" value="Genomic_DNA"/>
</dbReference>
<dbReference type="RefSeq" id="WP_000817229.1">
    <property type="nucleotide sequence ID" value="NC_011415.1"/>
</dbReference>
<dbReference type="SMR" id="B6HZQ1"/>
<dbReference type="GeneID" id="93777006"/>
<dbReference type="KEGG" id="ecy:ECSE_0470"/>
<dbReference type="HOGENOM" id="CLU_081854_0_0_6"/>
<dbReference type="UniPathway" id="UPA00391"/>
<dbReference type="Proteomes" id="UP000008199">
    <property type="component" value="Chromosome"/>
</dbReference>
<dbReference type="GO" id="GO:0005524">
    <property type="term" value="F:ATP binding"/>
    <property type="evidence" value="ECO:0007669"/>
    <property type="project" value="UniProtKB-UniRule"/>
</dbReference>
<dbReference type="GO" id="GO:0016879">
    <property type="term" value="F:ligase activity, forming carbon-nitrogen bonds"/>
    <property type="evidence" value="ECO:0007669"/>
    <property type="project" value="UniProtKB-UniRule"/>
</dbReference>
<dbReference type="GO" id="GO:0008270">
    <property type="term" value="F:zinc ion binding"/>
    <property type="evidence" value="ECO:0007669"/>
    <property type="project" value="UniProtKB-UniRule"/>
</dbReference>
<dbReference type="GO" id="GO:0008616">
    <property type="term" value="P:queuosine biosynthetic process"/>
    <property type="evidence" value="ECO:0007669"/>
    <property type="project" value="UniProtKB-UniRule"/>
</dbReference>
<dbReference type="CDD" id="cd01995">
    <property type="entry name" value="QueC-like"/>
    <property type="match status" value="1"/>
</dbReference>
<dbReference type="FunFam" id="3.40.50.620:FF:000017">
    <property type="entry name" value="7-cyano-7-deazaguanine synthase"/>
    <property type="match status" value="1"/>
</dbReference>
<dbReference type="Gene3D" id="3.40.50.620">
    <property type="entry name" value="HUPs"/>
    <property type="match status" value="1"/>
</dbReference>
<dbReference type="HAMAP" id="MF_01633">
    <property type="entry name" value="QueC"/>
    <property type="match status" value="1"/>
</dbReference>
<dbReference type="InterPro" id="IPR018317">
    <property type="entry name" value="QueC"/>
</dbReference>
<dbReference type="InterPro" id="IPR014729">
    <property type="entry name" value="Rossmann-like_a/b/a_fold"/>
</dbReference>
<dbReference type="NCBIfam" id="TIGR00364">
    <property type="entry name" value="7-cyano-7-deazaguanine synthase QueC"/>
    <property type="match status" value="1"/>
</dbReference>
<dbReference type="NCBIfam" id="NF008317">
    <property type="entry name" value="PRK11106.1"/>
    <property type="match status" value="1"/>
</dbReference>
<dbReference type="PANTHER" id="PTHR42914">
    <property type="entry name" value="7-CYANO-7-DEAZAGUANINE SYNTHASE"/>
    <property type="match status" value="1"/>
</dbReference>
<dbReference type="PANTHER" id="PTHR42914:SF1">
    <property type="entry name" value="7-CYANO-7-DEAZAGUANINE SYNTHASE"/>
    <property type="match status" value="1"/>
</dbReference>
<dbReference type="Pfam" id="PF06508">
    <property type="entry name" value="QueC"/>
    <property type="match status" value="1"/>
</dbReference>
<dbReference type="PIRSF" id="PIRSF006293">
    <property type="entry name" value="ExsB"/>
    <property type="match status" value="1"/>
</dbReference>
<dbReference type="SUPFAM" id="SSF52402">
    <property type="entry name" value="Adenine nucleotide alpha hydrolases-like"/>
    <property type="match status" value="1"/>
</dbReference>
<evidence type="ECO:0000255" key="1">
    <source>
        <dbReference type="HAMAP-Rule" id="MF_01633"/>
    </source>
</evidence>
<keyword id="KW-0067">ATP-binding</keyword>
<keyword id="KW-0436">Ligase</keyword>
<keyword id="KW-0479">Metal-binding</keyword>
<keyword id="KW-0547">Nucleotide-binding</keyword>
<keyword id="KW-0671">Queuosine biosynthesis</keyword>
<keyword id="KW-0862">Zinc</keyword>
<name>QUEC_ECOSE</name>